<accession>P14866</accession>
<accession>A6ND69</accession>
<accession>A6NIT8</accession>
<accession>Q9H3P3</accession>
<reference key="1">
    <citation type="journal article" date="2001" name="Cancer Res.">
        <title>Molecular basis of T cell-mediated recognition of pancreatic cancer cells.</title>
        <authorList>
            <person name="Ito M."/>
            <person name="Shichijo S."/>
            <person name="Tsuda N."/>
            <person name="Ochi M."/>
            <person name="Harashima N."/>
            <person name="Saito N."/>
            <person name="Itoh K."/>
        </authorList>
    </citation>
    <scope>NUCLEOTIDE SEQUENCE [MRNA] (ISOFORM 1)</scope>
    <source>
        <tissue>Pancreatic cancer</tissue>
    </source>
</reference>
<reference key="2">
    <citation type="journal article" date="2004" name="Nat. Genet.">
        <title>Complete sequencing and characterization of 21,243 full-length human cDNAs.</title>
        <authorList>
            <person name="Ota T."/>
            <person name="Suzuki Y."/>
            <person name="Nishikawa T."/>
            <person name="Otsuki T."/>
            <person name="Sugiyama T."/>
            <person name="Irie R."/>
            <person name="Wakamatsu A."/>
            <person name="Hayashi K."/>
            <person name="Sato H."/>
            <person name="Nagai K."/>
            <person name="Kimura K."/>
            <person name="Makita H."/>
            <person name="Sekine M."/>
            <person name="Obayashi M."/>
            <person name="Nishi T."/>
            <person name="Shibahara T."/>
            <person name="Tanaka T."/>
            <person name="Ishii S."/>
            <person name="Yamamoto J."/>
            <person name="Saito K."/>
            <person name="Kawai Y."/>
            <person name="Isono Y."/>
            <person name="Nakamura Y."/>
            <person name="Nagahari K."/>
            <person name="Murakami K."/>
            <person name="Yasuda T."/>
            <person name="Iwayanagi T."/>
            <person name="Wagatsuma M."/>
            <person name="Shiratori A."/>
            <person name="Sudo H."/>
            <person name="Hosoiri T."/>
            <person name="Kaku Y."/>
            <person name="Kodaira H."/>
            <person name="Kondo H."/>
            <person name="Sugawara M."/>
            <person name="Takahashi M."/>
            <person name="Kanda K."/>
            <person name="Yokoi T."/>
            <person name="Furuya T."/>
            <person name="Kikkawa E."/>
            <person name="Omura Y."/>
            <person name="Abe K."/>
            <person name="Kamihara K."/>
            <person name="Katsuta N."/>
            <person name="Sato K."/>
            <person name="Tanikawa M."/>
            <person name="Yamazaki M."/>
            <person name="Ninomiya K."/>
            <person name="Ishibashi T."/>
            <person name="Yamashita H."/>
            <person name="Murakawa K."/>
            <person name="Fujimori K."/>
            <person name="Tanai H."/>
            <person name="Kimata M."/>
            <person name="Watanabe M."/>
            <person name="Hiraoka S."/>
            <person name="Chiba Y."/>
            <person name="Ishida S."/>
            <person name="Ono Y."/>
            <person name="Takiguchi S."/>
            <person name="Watanabe S."/>
            <person name="Yosida M."/>
            <person name="Hotuta T."/>
            <person name="Kusano J."/>
            <person name="Kanehori K."/>
            <person name="Takahashi-Fujii A."/>
            <person name="Hara H."/>
            <person name="Tanase T.-O."/>
            <person name="Nomura Y."/>
            <person name="Togiya S."/>
            <person name="Komai F."/>
            <person name="Hara R."/>
            <person name="Takeuchi K."/>
            <person name="Arita M."/>
            <person name="Imose N."/>
            <person name="Musashino K."/>
            <person name="Yuuki H."/>
            <person name="Oshima A."/>
            <person name="Sasaki N."/>
            <person name="Aotsuka S."/>
            <person name="Yoshikawa Y."/>
            <person name="Matsunawa H."/>
            <person name="Ichihara T."/>
            <person name="Shiohata N."/>
            <person name="Sano S."/>
            <person name="Moriya S."/>
            <person name="Momiyama H."/>
            <person name="Satoh N."/>
            <person name="Takami S."/>
            <person name="Terashima Y."/>
            <person name="Suzuki O."/>
            <person name="Nakagawa S."/>
            <person name="Senoh A."/>
            <person name="Mizoguchi H."/>
            <person name="Goto Y."/>
            <person name="Shimizu F."/>
            <person name="Wakebe H."/>
            <person name="Hishigaki H."/>
            <person name="Watanabe T."/>
            <person name="Sugiyama A."/>
            <person name="Takemoto M."/>
            <person name="Kawakami B."/>
            <person name="Yamazaki M."/>
            <person name="Watanabe K."/>
            <person name="Kumagai A."/>
            <person name="Itakura S."/>
            <person name="Fukuzumi Y."/>
            <person name="Fujimori Y."/>
            <person name="Komiyama M."/>
            <person name="Tashiro H."/>
            <person name="Tanigami A."/>
            <person name="Fujiwara T."/>
            <person name="Ono T."/>
            <person name="Yamada K."/>
            <person name="Fujii Y."/>
            <person name="Ozaki K."/>
            <person name="Hirao M."/>
            <person name="Ohmori Y."/>
            <person name="Kawabata A."/>
            <person name="Hikiji T."/>
            <person name="Kobatake N."/>
            <person name="Inagaki H."/>
            <person name="Ikema Y."/>
            <person name="Okamoto S."/>
            <person name="Okitani R."/>
            <person name="Kawakami T."/>
            <person name="Noguchi S."/>
            <person name="Itoh T."/>
            <person name="Shigeta K."/>
            <person name="Senba T."/>
            <person name="Matsumura K."/>
            <person name="Nakajima Y."/>
            <person name="Mizuno T."/>
            <person name="Morinaga M."/>
            <person name="Sasaki M."/>
            <person name="Togashi T."/>
            <person name="Oyama M."/>
            <person name="Hata H."/>
            <person name="Watanabe M."/>
            <person name="Komatsu T."/>
            <person name="Mizushima-Sugano J."/>
            <person name="Satoh T."/>
            <person name="Shirai Y."/>
            <person name="Takahashi Y."/>
            <person name="Nakagawa K."/>
            <person name="Okumura K."/>
            <person name="Nagase T."/>
            <person name="Nomura N."/>
            <person name="Kikuchi H."/>
            <person name="Masuho Y."/>
            <person name="Yamashita R."/>
            <person name="Nakai K."/>
            <person name="Yada T."/>
            <person name="Nakamura Y."/>
            <person name="Ohara O."/>
            <person name="Isogai T."/>
            <person name="Sugano S."/>
        </authorList>
    </citation>
    <scope>NUCLEOTIDE SEQUENCE [LARGE SCALE MRNA] (ISOFORM 2)</scope>
    <source>
        <tissue>Synovium</tissue>
    </source>
</reference>
<reference key="3">
    <citation type="journal article" date="2004" name="Nature">
        <title>The DNA sequence and biology of human chromosome 19.</title>
        <authorList>
            <person name="Grimwood J."/>
            <person name="Gordon L.A."/>
            <person name="Olsen A.S."/>
            <person name="Terry A."/>
            <person name="Schmutz J."/>
            <person name="Lamerdin J.E."/>
            <person name="Hellsten U."/>
            <person name="Goodstein D."/>
            <person name="Couronne O."/>
            <person name="Tran-Gyamfi M."/>
            <person name="Aerts A."/>
            <person name="Altherr M."/>
            <person name="Ashworth L."/>
            <person name="Bajorek E."/>
            <person name="Black S."/>
            <person name="Branscomb E."/>
            <person name="Caenepeel S."/>
            <person name="Carrano A.V."/>
            <person name="Caoile C."/>
            <person name="Chan Y.M."/>
            <person name="Christensen M."/>
            <person name="Cleland C.A."/>
            <person name="Copeland A."/>
            <person name="Dalin E."/>
            <person name="Dehal P."/>
            <person name="Denys M."/>
            <person name="Detter J.C."/>
            <person name="Escobar J."/>
            <person name="Flowers D."/>
            <person name="Fotopulos D."/>
            <person name="Garcia C."/>
            <person name="Georgescu A.M."/>
            <person name="Glavina T."/>
            <person name="Gomez M."/>
            <person name="Gonzales E."/>
            <person name="Groza M."/>
            <person name="Hammon N."/>
            <person name="Hawkins T."/>
            <person name="Haydu L."/>
            <person name="Ho I."/>
            <person name="Huang W."/>
            <person name="Israni S."/>
            <person name="Jett J."/>
            <person name="Kadner K."/>
            <person name="Kimball H."/>
            <person name="Kobayashi A."/>
            <person name="Larionov V."/>
            <person name="Leem S.-H."/>
            <person name="Lopez F."/>
            <person name="Lou Y."/>
            <person name="Lowry S."/>
            <person name="Malfatti S."/>
            <person name="Martinez D."/>
            <person name="McCready P.M."/>
            <person name="Medina C."/>
            <person name="Morgan J."/>
            <person name="Nelson K."/>
            <person name="Nolan M."/>
            <person name="Ovcharenko I."/>
            <person name="Pitluck S."/>
            <person name="Pollard M."/>
            <person name="Popkie A.P."/>
            <person name="Predki P."/>
            <person name="Quan G."/>
            <person name="Ramirez L."/>
            <person name="Rash S."/>
            <person name="Retterer J."/>
            <person name="Rodriguez A."/>
            <person name="Rogers S."/>
            <person name="Salamov A."/>
            <person name="Salazar A."/>
            <person name="She X."/>
            <person name="Smith D."/>
            <person name="Slezak T."/>
            <person name="Solovyev V."/>
            <person name="Thayer N."/>
            <person name="Tice H."/>
            <person name="Tsai M."/>
            <person name="Ustaszewska A."/>
            <person name="Vo N."/>
            <person name="Wagner M."/>
            <person name="Wheeler J."/>
            <person name="Wu K."/>
            <person name="Xie G."/>
            <person name="Yang J."/>
            <person name="Dubchak I."/>
            <person name="Furey T.S."/>
            <person name="DeJong P."/>
            <person name="Dickson M."/>
            <person name="Gordon D."/>
            <person name="Eichler E.E."/>
            <person name="Pennacchio L.A."/>
            <person name="Richardson P."/>
            <person name="Stubbs L."/>
            <person name="Rokhsar D.S."/>
            <person name="Myers R.M."/>
            <person name="Rubin E.M."/>
            <person name="Lucas S.M."/>
        </authorList>
    </citation>
    <scope>NUCLEOTIDE SEQUENCE [LARGE SCALE GENOMIC DNA]</scope>
</reference>
<reference key="4">
    <citation type="submission" date="2005-07" db="EMBL/GenBank/DDBJ databases">
        <authorList>
            <person name="Mural R.J."/>
            <person name="Istrail S."/>
            <person name="Sutton G.G."/>
            <person name="Florea L."/>
            <person name="Halpern A.L."/>
            <person name="Mobarry C.M."/>
            <person name="Lippert R."/>
            <person name="Walenz B."/>
            <person name="Shatkay H."/>
            <person name="Dew I."/>
            <person name="Miller J.R."/>
            <person name="Flanigan M.J."/>
            <person name="Edwards N.J."/>
            <person name="Bolanos R."/>
            <person name="Fasulo D."/>
            <person name="Halldorsson B.V."/>
            <person name="Hannenhalli S."/>
            <person name="Turner R."/>
            <person name="Yooseph S."/>
            <person name="Lu F."/>
            <person name="Nusskern D.R."/>
            <person name="Shue B.C."/>
            <person name="Zheng X.H."/>
            <person name="Zhong F."/>
            <person name="Delcher A.L."/>
            <person name="Huson D.H."/>
            <person name="Kravitz S.A."/>
            <person name="Mouchard L."/>
            <person name="Reinert K."/>
            <person name="Remington K.A."/>
            <person name="Clark A.G."/>
            <person name="Waterman M.S."/>
            <person name="Eichler E.E."/>
            <person name="Adams M.D."/>
            <person name="Hunkapiller M.W."/>
            <person name="Myers E.W."/>
            <person name="Venter J.C."/>
        </authorList>
    </citation>
    <scope>NUCLEOTIDE SEQUENCE [LARGE SCALE GENOMIC DNA]</scope>
</reference>
<reference key="5">
    <citation type="journal article" date="1989" name="J. Cell Biol.">
        <title>A novel heterogeneous nuclear RNP protein with a unique distribution on nascent transcripts.</title>
        <authorList>
            <person name="Pinol-Roma S."/>
            <person name="Swanson M.S."/>
            <person name="Gall J.G."/>
            <person name="Dreyfuss G."/>
        </authorList>
    </citation>
    <scope>NUCLEOTIDE SEQUENCE [MRNA] OF 23-589 (ISOFORM 1)</scope>
    <scope>FUNCTION</scope>
    <scope>SUBCELLULAR LOCATION</scope>
</reference>
<reference key="6">
    <citation type="submission" date="2008-12" db="UniProtKB">
        <authorList>
            <person name="Lubec G."/>
            <person name="Vishwanath V."/>
            <person name="Chen W.-Q."/>
            <person name="Sun Y."/>
        </authorList>
    </citation>
    <scope>PROTEIN SEQUENCE OF 67-76; 199-215; 218-233; 386-403; 425-448 AND 549-558</scope>
    <scope>IDENTIFICATION BY MASS SPECTROMETRY</scope>
    <source>
        <tissue>Brain</tissue>
        <tissue>Cajal-Retzius cell</tissue>
        <tissue>Fetal brain cortex</tissue>
    </source>
</reference>
<reference key="7">
    <citation type="journal article" date="1992" name="Electrophoresis">
        <title>Microsequences of 145 proteins recorded in the two-dimensional gel protein database of normal human epidermal keratinocytes.</title>
        <authorList>
            <person name="Rasmussen H.H."/>
            <person name="van Damme J."/>
            <person name="Puype M."/>
            <person name="Gesser B."/>
            <person name="Celis J.E."/>
            <person name="Vandekerckhove J."/>
        </authorList>
    </citation>
    <scope>PARTIAL PROTEIN SEQUENCE</scope>
    <source>
        <tissue>Keratinocyte</tissue>
    </source>
</reference>
<reference key="8">
    <citation type="journal article" date="2002" name="Nucleic Acids Res.">
        <title>Human AP-endonuclease 1 and hnRNP-L interact with a nCaRE-like repressor element in the AP-endonuclease 1 promoter.</title>
        <authorList>
            <person name="Kuninger D.T."/>
            <person name="Izumi T."/>
            <person name="Papaconstantinou J."/>
            <person name="Mitra S."/>
        </authorList>
    </citation>
    <scope>FUNCTION</scope>
    <scope>INTERACTION WITH APEX1</scope>
</reference>
<reference key="9">
    <citation type="journal article" date="2007" name="Mol. Cell. Proteomics">
        <title>Molecular composition of IMP1 ribonucleoprotein granules.</title>
        <authorList>
            <person name="Joeson L."/>
            <person name="Vikesaa J."/>
            <person name="Krogh A."/>
            <person name="Nielsen L.K."/>
            <person name="Hansen T."/>
            <person name="Borup R."/>
            <person name="Johnsen A.H."/>
            <person name="Christiansen J."/>
            <person name="Nielsen F.C."/>
        </authorList>
    </citation>
    <scope>IDENTIFICATION IN A MRNP GRANULE COMPLEX</scope>
    <scope>IDENTIFICATION BY MASS SPECTROMETRY</scope>
    <scope>SUBCELLULAR LOCATION</scope>
</reference>
<reference key="10">
    <citation type="journal article" date="2008" name="Hepatology">
        <title>Natural antisense transcript stabilizes inducible nitric oxide synthase messenger RNA in rat hepatocytes.</title>
        <authorList>
            <person name="Matsui K."/>
            <person name="Nishizawa M."/>
            <person name="Ozaki T."/>
            <person name="Kimura T."/>
            <person name="Hashimoto I."/>
            <person name="Yamada M."/>
            <person name="Kaibori M."/>
            <person name="Kamiyama Y."/>
            <person name="Ito S."/>
            <person name="Okumura T."/>
        </authorList>
    </citation>
    <scope>INTERACTION WITH ELAVL1</scope>
</reference>
<reference key="11">
    <citation type="journal article" date="2008" name="Proc. Natl. Acad. Sci. U.S.A.">
        <title>A quantitative atlas of mitotic phosphorylation.</title>
        <authorList>
            <person name="Dephoure N."/>
            <person name="Zhou C."/>
            <person name="Villen J."/>
            <person name="Beausoleil S.A."/>
            <person name="Bakalarski C.E."/>
            <person name="Elledge S.J."/>
            <person name="Gygi S.P."/>
        </authorList>
    </citation>
    <scope>PHOSPHORYLATION [LARGE SCALE ANALYSIS] AT SER-52 AND SER-298</scope>
    <scope>IDENTIFICATION BY MASS SPECTROMETRY [LARGE SCALE ANALYSIS]</scope>
    <source>
        <tissue>Cervix carcinoma</tissue>
    </source>
</reference>
<reference key="12">
    <citation type="journal article" date="2008" name="Science">
        <title>Regulation of CD45 alternative splicing by heterogeneous ribonucleoprotein, hnRNPLL.</title>
        <authorList>
            <person name="Oberdoerffer S."/>
            <person name="Moita L.F."/>
            <person name="Neems D."/>
            <person name="Freitas R.P."/>
            <person name="Hacohen N."/>
            <person name="Rao A."/>
        </authorList>
    </citation>
    <scope>INTERACTION WITH HNRNPLL</scope>
</reference>
<reference key="13">
    <citation type="journal article" date="2009" name="J. Biol. Chem.">
        <title>Heterogeneous nuclear ribonucleoprotein L is a subunit of human KMT3a/Set2 complex required for H3 Lys-36 trimethylation activity in vivo.</title>
        <authorList>
            <person name="Yuan W."/>
            <person name="Xie J."/>
            <person name="Long C."/>
            <person name="Erdjument-Bromage H."/>
            <person name="Ding X."/>
            <person name="Zheng Y."/>
            <person name="Tempst P."/>
            <person name="Chen S."/>
            <person name="Zhu B."/>
            <person name="Reinberg D."/>
        </authorList>
    </citation>
    <scope>INTERACTION WITH SETD2</scope>
</reference>
<reference key="14">
    <citation type="journal article" date="2009" name="Mol. Cell. Biol.">
        <title>Auto- and cross-regulation of the hnRNP L proteins by alternative splicing.</title>
        <authorList>
            <person name="Rossbach O."/>
            <person name="Hung L.H."/>
            <person name="Schreiner S."/>
            <person name="Grishina I."/>
            <person name="Heiner M."/>
            <person name="Hui J."/>
            <person name="Bindereif A."/>
        </authorList>
    </citation>
    <scope>ALTERNATIVE SPLICING</scope>
    <scope>MISCELLANEOUS</scope>
</reference>
<reference key="15">
    <citation type="journal article" date="2009" name="Science">
        <title>Lysine acetylation targets protein complexes and co-regulates major cellular functions.</title>
        <authorList>
            <person name="Choudhary C."/>
            <person name="Kumar C."/>
            <person name="Gnad F."/>
            <person name="Nielsen M.L."/>
            <person name="Rehman M."/>
            <person name="Walther T.C."/>
            <person name="Olsen J.V."/>
            <person name="Mann M."/>
        </authorList>
    </citation>
    <scope>ACETYLATION [LARGE SCALE ANALYSIS] AT LYS-269</scope>
    <scope>IDENTIFICATION BY MASS SPECTROMETRY [LARGE SCALE ANALYSIS]</scope>
</reference>
<reference key="16">
    <citation type="journal article" date="2010" name="Sci. Signal.">
        <title>Quantitative phosphoproteomics reveals widespread full phosphorylation site occupancy during mitosis.</title>
        <authorList>
            <person name="Olsen J.V."/>
            <person name="Vermeulen M."/>
            <person name="Santamaria A."/>
            <person name="Kumar C."/>
            <person name="Miller M.L."/>
            <person name="Jensen L.J."/>
            <person name="Gnad F."/>
            <person name="Cox J."/>
            <person name="Jensen T.S."/>
            <person name="Nigg E.A."/>
            <person name="Brunak S."/>
            <person name="Mann M."/>
        </authorList>
    </citation>
    <scope>PHOSPHORYLATION [LARGE SCALE ANALYSIS] AT SER-52; SER-185 AND SER-298</scope>
    <scope>IDENTIFICATION BY MASS SPECTROMETRY [LARGE SCALE ANALYSIS]</scope>
    <source>
        <tissue>Cervix carcinoma</tissue>
    </source>
</reference>
<reference key="17">
    <citation type="journal article" date="2011" name="BMC Syst. Biol.">
        <title>Initial characterization of the human central proteome.</title>
        <authorList>
            <person name="Burkard T.R."/>
            <person name="Planyavsky M."/>
            <person name="Kaupe I."/>
            <person name="Breitwieser F.P."/>
            <person name="Buerckstuemmer T."/>
            <person name="Bennett K.L."/>
            <person name="Superti-Furga G."/>
            <person name="Colinge J."/>
        </authorList>
    </citation>
    <scope>IDENTIFICATION BY MASS SPECTROMETRY [LARGE SCALE ANALYSIS]</scope>
</reference>
<reference key="18">
    <citation type="journal article" date="2011" name="Sci. Signal.">
        <title>System-wide temporal characterization of the proteome and phosphoproteome of human embryonic stem cell differentiation.</title>
        <authorList>
            <person name="Rigbolt K.T."/>
            <person name="Prokhorova T.A."/>
            <person name="Akimov V."/>
            <person name="Henningsen J."/>
            <person name="Johansen P.T."/>
            <person name="Kratchmarova I."/>
            <person name="Kassem M."/>
            <person name="Mann M."/>
            <person name="Olsen J.V."/>
            <person name="Blagoev B."/>
        </authorList>
    </citation>
    <scope>PHOSPHORYLATION [LARGE SCALE ANALYSIS] AT SER-52; SER-101; SER-185; SER-291 AND SER-298</scope>
    <scope>IDENTIFICATION BY MASS SPECTROMETRY [LARGE SCALE ANALYSIS]</scope>
</reference>
<reference key="19">
    <citation type="journal article" date="2012" name="J. Biol. Chem.">
        <title>A conserved serine of heterogeneous nuclear ribonucleoprotein L (hnRNP L) mediates depolarization-regulated alternative splicing of potassium channels.</title>
        <authorList>
            <person name="Liu G."/>
            <person name="Razanau A."/>
            <person name="Hai Y."/>
            <person name="Yu J."/>
            <person name="Sohail M."/>
            <person name="Lobo V.G."/>
            <person name="Chu J."/>
            <person name="Kung S.K."/>
            <person name="Xie J."/>
        </authorList>
    </citation>
    <scope>PHOSPHORYLATION AT SER-544</scope>
    <scope>FUNCTION</scope>
</reference>
<reference key="20">
    <citation type="journal article" date="2012" name="Proc. Natl. Acad. Sci. U.S.A.">
        <title>N-terminal acetylome analyses and functional insights of the N-terminal acetyltransferase NatB.</title>
        <authorList>
            <person name="Van Damme P."/>
            <person name="Lasa M."/>
            <person name="Polevoda B."/>
            <person name="Gazquez C."/>
            <person name="Elosegui-Artola A."/>
            <person name="Kim D.S."/>
            <person name="De Juan-Pardo E."/>
            <person name="Demeyer K."/>
            <person name="Hole K."/>
            <person name="Larrea E."/>
            <person name="Timmerman E."/>
            <person name="Prieto J."/>
            <person name="Arnesen T."/>
            <person name="Sherman F."/>
            <person name="Gevaert K."/>
            <person name="Aldabe R."/>
        </authorList>
    </citation>
    <scope>IDENTIFICATION BY MASS SPECTROMETRY [LARGE SCALE ANALYSIS]</scope>
</reference>
<reference key="21">
    <citation type="journal article" date="2013" name="J. Proteome Res.">
        <title>Toward a comprehensive characterization of a human cancer cell phosphoproteome.</title>
        <authorList>
            <person name="Zhou H."/>
            <person name="Di Palma S."/>
            <person name="Preisinger C."/>
            <person name="Peng M."/>
            <person name="Polat A.N."/>
            <person name="Heck A.J."/>
            <person name="Mohammed S."/>
        </authorList>
    </citation>
    <scope>PHOSPHORYLATION [LARGE SCALE ANALYSIS] AT SER-52; SER-101; SER-185 AND SER-298</scope>
    <scope>IDENTIFICATION BY MASS SPECTROMETRY [LARGE SCALE ANALYSIS]</scope>
    <source>
        <tissue>Cervix carcinoma</tissue>
        <tissue>Erythroleukemia</tissue>
    </source>
</reference>
<reference key="22">
    <citation type="journal article" date="2014" name="J. Proteomics">
        <title>An enzyme assisted RP-RPLC approach for in-depth analysis of human liver phosphoproteome.</title>
        <authorList>
            <person name="Bian Y."/>
            <person name="Song C."/>
            <person name="Cheng K."/>
            <person name="Dong M."/>
            <person name="Wang F."/>
            <person name="Huang J."/>
            <person name="Sun D."/>
            <person name="Wang L."/>
            <person name="Ye M."/>
            <person name="Zou H."/>
        </authorList>
    </citation>
    <scope>IDENTIFICATION BY MASS SPECTROMETRY [LARGE SCALE ANALYSIS]</scope>
    <source>
        <tissue>Liver</tissue>
    </source>
</reference>
<reference key="23">
    <citation type="journal article" date="2014" name="Mol. Cell. Biol.">
        <title>Transcriptome-wide RNA interaction profiling reveals physical and functional targets of hnRNP L in human T cells.</title>
        <authorList>
            <person name="Shankarling G."/>
            <person name="Cole B.S."/>
            <person name="Mallory M.J."/>
            <person name="Lynch K.W."/>
        </authorList>
    </citation>
    <scope>FUNCTION</scope>
</reference>
<reference key="24">
    <citation type="journal article" date="2014" name="Nat. Struct. Mol. Biol.">
        <title>Uncovering global SUMOylation signaling networks in a site-specific manner.</title>
        <authorList>
            <person name="Hendriks I.A."/>
            <person name="D'Souza R.C."/>
            <person name="Yang B."/>
            <person name="Verlaan-de Vries M."/>
            <person name="Mann M."/>
            <person name="Vertegaal A.C."/>
        </authorList>
    </citation>
    <scope>SUMOYLATION [LARGE SCALE ANALYSIS] AT LYS-62</scope>
    <scope>IDENTIFICATION BY MASS SPECTROMETRY [LARGE SCALE ANALYSIS]</scope>
</reference>
<reference key="25">
    <citation type="journal article" date="2015" name="Biochim. Biophys. Acta">
        <title>hnRNP L inhibits CD44 V10 exon splicing through interacting with its upstream intron.</title>
        <authorList>
            <person name="Loh T.J."/>
            <person name="Cho S."/>
            <person name="Moon H."/>
            <person name="Jang H.N."/>
            <person name="Williams D.R."/>
            <person name="Jung D.W."/>
            <person name="Kim I.C."/>
            <person name="Ghigna C."/>
            <person name="Biamonti G."/>
            <person name="Zheng X."/>
            <person name="Shen H."/>
        </authorList>
    </citation>
    <scope>FUNCTION</scope>
</reference>
<reference key="26">
    <citation type="journal article" date="2015" name="Cell Rep.">
        <title>SUMO-2 orchestrates chromatin modifiers in response to DNA damage.</title>
        <authorList>
            <person name="Hendriks I.A."/>
            <person name="Treffers L.W."/>
            <person name="Verlaan-de Vries M."/>
            <person name="Olsen J.V."/>
            <person name="Vertegaal A.C."/>
        </authorList>
    </citation>
    <scope>SUMOYLATION [LARGE SCALE ANALYSIS] AT LYS-136</scope>
    <scope>IDENTIFICATION BY MASS SPECTROMETRY [LARGE SCALE ANALYSIS]</scope>
</reference>
<reference key="27">
    <citation type="journal article" date="2015" name="J. Mol. Biol.">
        <title>The signature of the five-stranded vRRM fold defined by functional, structural and computational analysis of the hnRNP L protein.</title>
        <authorList>
            <person name="Blatter M."/>
            <person name="Dunin-Horkawicz S."/>
            <person name="Grishina I."/>
            <person name="Maris C."/>
            <person name="Thore S."/>
            <person name="Maier T."/>
            <person name="Bindereif A."/>
            <person name="Bujnicki J.M."/>
            <person name="Allain F.H."/>
        </authorList>
    </citation>
    <scope>FUNCTION</scope>
    <scope>SUBCELLULAR LOCATION</scope>
</reference>
<reference key="28">
    <citation type="journal article" date="2015" name="Mol. Cell. Proteomics">
        <title>System-wide analysis of SUMOylation dynamics in response to replication stress reveals novel small ubiquitin-like modified target proteins and acceptor lysines relevant for genome stability.</title>
        <authorList>
            <person name="Xiao Z."/>
            <person name="Chang J.G."/>
            <person name="Hendriks I.A."/>
            <person name="Sigurdsson J.O."/>
            <person name="Olsen J.V."/>
            <person name="Vertegaal A.C."/>
        </authorList>
    </citation>
    <scope>SUMOYLATION [LARGE SCALE ANALYSIS] AT LYS-62</scope>
    <scope>IDENTIFICATION BY MASS SPECTROMETRY [LARGE SCALE ANALYSIS]</scope>
</reference>
<reference key="29">
    <citation type="journal article" date="2015" name="Proteomics">
        <title>N-terminome analysis of the human mitochondrial proteome.</title>
        <authorList>
            <person name="Vaca Jacome A.S."/>
            <person name="Rabilloud T."/>
            <person name="Schaeffer-Reiss C."/>
            <person name="Rompais M."/>
            <person name="Ayoub D."/>
            <person name="Lane L."/>
            <person name="Bairoch A."/>
            <person name="Van Dorsselaer A."/>
            <person name="Carapito C."/>
        </authorList>
    </citation>
    <scope>IDENTIFICATION BY MASS SPECTROMETRY [LARGE SCALE ANALYSIS]</scope>
</reference>
<reference key="30">
    <citation type="journal article" date="2017" name="Nat. Struct. Mol. Biol.">
        <title>Site-specific mapping of the human SUMO proteome reveals co-modification with phosphorylation.</title>
        <authorList>
            <person name="Hendriks I.A."/>
            <person name="Lyon D."/>
            <person name="Young C."/>
            <person name="Jensen L.J."/>
            <person name="Vertegaal A.C."/>
            <person name="Nielsen M.L."/>
        </authorList>
    </citation>
    <scope>SUMOYLATION [LARGE SCALE ANALYSIS] AT LYS-59; LYS-62; LYS-136; LYS-302 AND LYS-568</scope>
    <scope>IDENTIFICATION BY MASS SPECTROMETRY [LARGE SCALE ANALYSIS]</scope>
</reference>
<reference key="31">
    <citation type="journal article" date="2020" name="Elife">
        <title>circZNF827 nucleates a transcription inhibitory complex to balance neuronal differentiation.</title>
        <authorList>
            <person name="Hollensen A.K."/>
            <person name="Thomsen H.S."/>
            <person name="Lloret-Llinares M."/>
            <person name="Kamstrup A.B."/>
            <person name="Jensen J.M."/>
            <person name="Luckmann M."/>
            <person name="Birkmose N."/>
            <person name="Palmfeldt J."/>
            <person name="Jensen T.H."/>
            <person name="Hansen T.B."/>
            <person name="Damgaard C.K."/>
        </authorList>
    </citation>
    <scope>FUNCTION</scope>
    <scope>SUBUNIT</scope>
</reference>
<reference key="32">
    <citation type="journal article" date="2022" name="Nucleic Acids Res.">
        <title>CHD8 suppression impacts on histone H3 lysine 36 trimethylation and alters RNA alternative splicing.</title>
        <authorList>
            <person name="Kerschbamer E."/>
            <person name="Arnoldi M."/>
            <person name="Tripathi T."/>
            <person name="Pellegrini M."/>
            <person name="Maturi S."/>
            <person name="Erdin S."/>
            <person name="Salviato E."/>
            <person name="Di Leva F."/>
            <person name="Sebestyen E."/>
            <person name="Dassi E."/>
            <person name="Zarantonello G."/>
            <person name="Benelli M."/>
            <person name="Campos E."/>
            <person name="Basson M.A."/>
            <person name="Gusella J.F."/>
            <person name="Gustincich S."/>
            <person name="Piazza S."/>
            <person name="Demichelis F."/>
            <person name="Talkowski M.E."/>
            <person name="Ferrari F."/>
            <person name="Biagioli M."/>
        </authorList>
    </citation>
    <scope>FUNCTION</scope>
    <scope>SUBCELLULAR LOCATION</scope>
    <scope>INTERACTION WITH CHD8 AND SETD2</scope>
</reference>
<reference key="33">
    <citation type="journal article" date="2013" name="J. Biol. Chem.">
        <title>Crystal structures and RNA-binding properties of the RNA recognition motifs of heterogeneous nuclear ribonucleoprotein L: insights into its roles in alternative splicing regulation.</title>
        <authorList>
            <person name="Zhang W."/>
            <person name="Zeng F."/>
            <person name="Liu Y."/>
            <person name="Zhao Y."/>
            <person name="Lv H."/>
            <person name="Niu L."/>
            <person name="Teng M."/>
            <person name="Li X."/>
        </authorList>
    </citation>
    <scope>X-RAY CRYSTALLOGRAPHY (2.04 ANGSTROMS) OF 90-180</scope>
    <scope>X-RAY CRYSTALLOGRAPHY (1.82 ANGSTROMS) OF 380-589</scope>
    <scope>RNA-BINDING</scope>
    <scope>RRM DOMAINS</scope>
    <scope>MUTAGENESIS OF HIS-105; VAL-132; LEU-141; ASN-172; SER-174; HIS-504 AND PHE-506</scope>
</reference>
<comment type="function">
    <text evidence="4 9 11 12 13 14 15">Splicing factor binding to exonic or intronic sites and acting as either an activator or repressor of exon inclusion. Exhibits a binding preference for CA-rich elements (PubMed:11809897, PubMed:22570490, PubMed:24164894, PubMed:25623890, PubMed:26051023). Component of the heterogeneous nuclear ribonucleoprotein (hnRNP) complexes and associated with most nascent transcripts (PubMed:2687284). Associates, together with APEX1, to the negative calcium responsive element (nCaRE) B2 of the APEX2 promoter (PubMed:11809897). As part of a ribonucleoprotein complex composed at least of ZNF827, HNRNPK and the circular RNA circZNF827 that nucleates the complex on chromatin, may negatively regulate the transcription of genes involved in neuronal differentiation (PubMed:33174841). Regulates alternative splicing of a core group of genes involved in neuronal differentiation, likely by mediating H3K36me3-coupled transcription elongation and co-transcriptional RNA processing via interaction with CHD8.</text>
</comment>
<comment type="subunit">
    <text evidence="4 5 6 7 8 14 15">Identified in a IGF2BP1-dependent mRNP granule complex containing untranslated mRNAs (PubMed:17289661). Interacts with HNRNPLL (PubMed:18669861). Interacts with APEX1; the interaction is DNA-dependent (PubMed:11809897). Component of a complex with SETD2 (PubMed:19332550, PubMed:36537238). Interacts with ELAVL1 (PubMed:18161049). Part of a transcription inhibitory ribonucleoprotein complex composed at least of the circular RNA circZNF827, ZNF827 and HNRNPK (PubMed:33174841). Interacts with CHD8 in an RNA-dependent manner.</text>
</comment>
<comment type="interaction">
    <interactant intactId="EBI-719024">
        <id>P14866</id>
    </interactant>
    <interactant intactId="EBI-299649">
        <id>P22626</id>
        <label>HNRNPA2B1</label>
    </interactant>
    <organismsDiffer>false</organismsDiffer>
    <experiments>4</experiments>
</comment>
<comment type="interaction">
    <interactant intactId="EBI-719024">
        <id>P14866</id>
    </interactant>
    <interactant intactId="EBI-304185">
        <id>P61978</id>
        <label>HNRNPK</label>
    </interactant>
    <organismsDiffer>false</organismsDiffer>
    <experiments>5</experiments>
</comment>
<comment type="interaction">
    <interactant intactId="EBI-719024">
        <id>P14866</id>
    </interactant>
    <interactant intactId="EBI-2512147">
        <id>Q8IUH3</id>
        <label>RBM45</label>
    </interactant>
    <organismsDiffer>false</organismsDiffer>
    <experiments>5</experiments>
</comment>
<comment type="interaction">
    <interactant intactId="EBI-719024">
        <id>P14866</id>
    </interactant>
    <interactant intactId="EBI-301246">
        <id>P40337</id>
        <label>VHL</label>
    </interactant>
    <organismsDiffer>false</organismsDiffer>
    <experiments>2</experiments>
</comment>
<comment type="interaction">
    <interactant intactId="EBI-16071645">
        <id>P14866-1</id>
    </interactant>
    <interactant intactId="EBI-299649">
        <id>P22626</id>
        <label>HNRNPA2B1</label>
    </interactant>
    <organismsDiffer>false</organismsDiffer>
    <experiments>4</experiments>
</comment>
<comment type="interaction">
    <interactant intactId="EBI-16071645">
        <id>P14866-1</id>
    </interactant>
    <interactant intactId="EBI-78756">
        <id>Q12906</id>
        <label>ILF3</label>
    </interactant>
    <organismsDiffer>false</organismsDiffer>
    <experiments>2</experiments>
</comment>
<comment type="subcellular location">
    <subcellularLocation>
        <location evidence="5 13 19 20">Nucleus</location>
        <location evidence="5 13 19 20">Nucleoplasm</location>
    </subcellularLocation>
    <subcellularLocation>
        <location evidence="5">Cytoplasm</location>
    </subcellularLocation>
    <text evidence="5">Localized in cytoplasmic mRNP granules containing untranslated mRNAs. These granules are not identical with P bodies or stress granules.</text>
</comment>
<comment type="alternative products">
    <event type="alternative splicing"/>
    <isoform>
        <id>P14866-1</id>
        <name>1</name>
        <sequence type="displayed"/>
    </isoform>
    <isoform>
        <id>P14866-2</id>
        <name>2</name>
        <sequence type="described" ref="VSP_044301"/>
    </isoform>
</comment>
<comment type="domain">
    <text evidence="10">RRM domain 2 has moderate RNA-binding affinity. RRM domains 3 and 4 may facilitate RNA looping when binding to two appropriately separated binding sites within the same target pre-mRNA (PubMed:23782695).</text>
</comment>
<comment type="PTM">
    <text>Several isoelectric forms of the L protein are probably the results of post-translational modifications.</text>
</comment>
<comment type="PTM">
    <text evidence="9">Phosphorylation at Ser-544 by CaMK4 enhances interaction with a CaMK4-responsive RNA element (CaRRE1), and prevents inclusion of the stress axis-regulated exon (STREX) of the KCNMA1 potassium channel transcripts upon membrane depolarization.</text>
</comment>
<comment type="miscellaneous">
    <text evidence="18">Excess hnRNP L activates NMD of its own mRNA by promoting the inclusion of a 'poison exon' containing a premature stop codon and leading to nonsense-mediated decay. It also cross-regulates inclusion of an analogous 'poison exon' in the hnRNP L-like pre-mRNA (PubMed:19124611).</text>
</comment>
<comment type="sequence caution" evidence="17">
    <conflict type="erroneous initiation">
        <sequence resource="EMBL-CDS" id="CAA34261"/>
    </conflict>
    <text>Truncated N-terminus.</text>
</comment>
<feature type="chain" id="PRO_0000081862" description="Heterogeneous nuclear ribonucleoprotein L">
    <location>
        <begin position="1"/>
        <end position="589"/>
    </location>
</feature>
<feature type="domain" description="RRM 1" evidence="2">
    <location>
        <begin position="102"/>
        <end position="176"/>
    </location>
</feature>
<feature type="domain" description="RRM 2" evidence="2">
    <location>
        <begin position="193"/>
        <end position="270"/>
    </location>
</feature>
<feature type="domain" description="RRM 3" evidence="2">
    <location>
        <begin position="382"/>
        <end position="478"/>
    </location>
</feature>
<feature type="domain" description="RRM 4" evidence="2">
    <location>
        <begin position="495"/>
        <end position="583"/>
    </location>
</feature>
<feature type="region of interest" description="Disordered" evidence="3">
    <location>
        <begin position="1"/>
        <end position="100"/>
    </location>
</feature>
<feature type="region of interest" description="Disordered" evidence="3">
    <location>
        <begin position="284"/>
        <end position="378"/>
    </location>
</feature>
<feature type="compositionally biased region" description="Basic residues" evidence="3">
    <location>
        <begin position="1"/>
        <end position="16"/>
    </location>
</feature>
<feature type="compositionally biased region" description="Basic and acidic residues" evidence="3">
    <location>
        <begin position="17"/>
        <end position="27"/>
    </location>
</feature>
<feature type="compositionally biased region" description="Gly residues" evidence="3">
    <location>
        <begin position="38"/>
        <end position="54"/>
    </location>
</feature>
<feature type="compositionally biased region" description="Gly residues" evidence="3">
    <location>
        <begin position="69"/>
        <end position="90"/>
    </location>
</feature>
<feature type="compositionally biased region" description="Polar residues" evidence="3">
    <location>
        <begin position="284"/>
        <end position="301"/>
    </location>
</feature>
<feature type="compositionally biased region" description="Pro residues" evidence="3">
    <location>
        <begin position="364"/>
        <end position="375"/>
    </location>
</feature>
<feature type="modified residue" description="Phosphoserine" evidence="21 23 24 25">
    <location>
        <position position="52"/>
    </location>
</feature>
<feature type="modified residue" description="Phosphoserine" evidence="24 25">
    <location>
        <position position="101"/>
    </location>
</feature>
<feature type="modified residue" description="Phosphoserine" evidence="23 24 25">
    <location>
        <position position="185"/>
    </location>
</feature>
<feature type="modified residue" description="N6-acetyllysine" evidence="22">
    <location>
        <position position="269"/>
    </location>
</feature>
<feature type="modified residue" description="Phosphoserine" evidence="24">
    <location>
        <position position="291"/>
    </location>
</feature>
<feature type="modified residue" description="Phosphoserine" evidence="21 23 24 25">
    <location>
        <position position="298"/>
    </location>
</feature>
<feature type="modified residue" description="Asymmetric dimethylarginine" evidence="1">
    <location>
        <position position="354"/>
    </location>
</feature>
<feature type="modified residue" description="Asymmetric dimethylarginine" evidence="1">
    <location>
        <position position="358"/>
    </location>
</feature>
<feature type="modified residue" description="Phosphoserine" evidence="1">
    <location>
        <position position="381"/>
    </location>
</feature>
<feature type="modified residue" description="Phosphoserine; by CaMK4" evidence="9">
    <location>
        <position position="544"/>
    </location>
</feature>
<feature type="cross-link" description="Glycyl lysine isopeptide (Lys-Gly) (interchain with G-Cter in SUMO2)" evidence="29">
    <location>
        <position position="59"/>
    </location>
</feature>
<feature type="cross-link" description="Glycyl lysine isopeptide (Lys-Gly) (interchain with G-Cter in SUMO2)" evidence="26 27 29">
    <location>
        <position position="62"/>
    </location>
</feature>
<feature type="cross-link" description="Glycyl lysine isopeptide (Lys-Gly) (interchain with G-Cter in SUMO2)" evidence="28 29">
    <location>
        <position position="136"/>
    </location>
</feature>
<feature type="cross-link" description="Glycyl lysine isopeptide (Lys-Gly) (interchain with G-Cter in SUMO2)" evidence="29">
    <location>
        <position position="302"/>
    </location>
</feature>
<feature type="cross-link" description="Glycyl lysine isopeptide (Lys-Gly) (interchain with G-Cter in SUMO2)" evidence="29">
    <location>
        <position position="568"/>
    </location>
</feature>
<feature type="splice variant" id="VSP_044301" description="In isoform 2." evidence="16">
    <location>
        <begin position="1"/>
        <end position="133"/>
    </location>
</feature>
<feature type="mutagenesis site" description="6-fold decrease in RNA-binding affinity." evidence="10">
    <original>H</original>
    <variation>A</variation>
    <location>
        <position position="105"/>
    </location>
</feature>
<feature type="mutagenesis site" description="4-fold increase in RNA-binding affinity." evidence="10">
    <original>V</original>
    <variation>A</variation>
    <location>
        <position position="132"/>
    </location>
</feature>
<feature type="mutagenesis site" description="15-fold decrease in RNA-binding affinity; when associated with A-174." evidence="10">
    <original>L</original>
    <variation>A</variation>
    <location>
        <position position="141"/>
    </location>
</feature>
<feature type="mutagenesis site" description="1-fold increase in RNA-binding affinity." evidence="10">
    <original>N</original>
    <variation>A</variation>
    <location>
        <position position="172"/>
    </location>
</feature>
<feature type="mutagenesis site" description="15-fold decrease in RNA-binding affinity; when associated with A-174." evidence="10">
    <original>S</original>
    <variation>A</variation>
    <location>
        <position position="174"/>
    </location>
</feature>
<feature type="mutagenesis site" description="Significant decrease in RNA-binding affinity." evidence="10">
    <original>H</original>
    <variation>A</variation>
    <location>
        <position position="504"/>
    </location>
</feature>
<feature type="mutagenesis site" description="Significant decrease in RNA-binding affinity." evidence="10">
    <original>F</original>
    <variation>A</variation>
    <location>
        <position position="506"/>
    </location>
</feature>
<feature type="sequence conflict" description="In Ref. 1; BAB18649 and 5; CAA34261." evidence="17" ref="1 5">
    <original>C</original>
    <variation>G</variation>
    <location>
        <position position="396"/>
    </location>
</feature>
<feature type="strand" evidence="30">
    <location>
        <begin position="102"/>
        <end position="108"/>
    </location>
</feature>
<feature type="helix" evidence="30">
    <location>
        <begin position="115"/>
        <end position="122"/>
    </location>
</feature>
<feature type="helix" evidence="30">
    <location>
        <begin position="123"/>
        <end position="125"/>
    </location>
</feature>
<feature type="strand" evidence="30">
    <location>
        <begin position="128"/>
        <end position="134"/>
    </location>
</feature>
<feature type="turn" evidence="30">
    <location>
        <begin position="135"/>
        <end position="138"/>
    </location>
</feature>
<feature type="strand" evidence="30">
    <location>
        <begin position="139"/>
        <end position="146"/>
    </location>
</feature>
<feature type="helix" evidence="30">
    <location>
        <begin position="147"/>
        <end position="159"/>
    </location>
</feature>
<feature type="strand" evidence="30">
    <location>
        <begin position="162"/>
        <end position="164"/>
    </location>
</feature>
<feature type="strand" evidence="30">
    <location>
        <begin position="167"/>
        <end position="173"/>
    </location>
</feature>
<feature type="strand" evidence="32">
    <location>
        <begin position="193"/>
        <end position="201"/>
    </location>
</feature>
<feature type="helix" evidence="32">
    <location>
        <begin position="208"/>
        <end position="215"/>
    </location>
</feature>
<feature type="turn" evidence="32">
    <location>
        <begin position="216"/>
        <end position="218"/>
    </location>
</feature>
<feature type="strand" evidence="32">
    <location>
        <begin position="221"/>
        <end position="227"/>
    </location>
</feature>
<feature type="strand" evidence="32">
    <location>
        <begin position="229"/>
        <end position="240"/>
    </location>
</feature>
<feature type="helix" evidence="32">
    <location>
        <begin position="241"/>
        <end position="251"/>
    </location>
</feature>
<feature type="strand" evidence="32">
    <location>
        <begin position="255"/>
        <end position="257"/>
    </location>
</feature>
<feature type="strand" evidence="32">
    <location>
        <begin position="260"/>
        <end position="267"/>
    </location>
</feature>
<feature type="strand" evidence="32">
    <location>
        <begin position="279"/>
        <end position="284"/>
    </location>
</feature>
<feature type="strand" evidence="31">
    <location>
        <begin position="382"/>
        <end position="387"/>
    </location>
</feature>
<feature type="turn" evidence="31">
    <location>
        <begin position="391"/>
        <end position="393"/>
    </location>
</feature>
<feature type="helix" evidence="31">
    <location>
        <begin position="396"/>
        <end position="403"/>
    </location>
</feature>
<feature type="turn" evidence="31">
    <location>
        <begin position="404"/>
        <end position="406"/>
    </location>
</feature>
<feature type="strand" evidence="31">
    <location>
        <begin position="409"/>
        <end position="414"/>
    </location>
</feature>
<feature type="strand" evidence="31">
    <location>
        <begin position="421"/>
        <end position="428"/>
    </location>
</feature>
<feature type="helix" evidence="31">
    <location>
        <begin position="429"/>
        <end position="439"/>
    </location>
</feature>
<feature type="strand" evidence="31">
    <location>
        <begin position="450"/>
        <end position="453"/>
    </location>
</feature>
<feature type="strand" evidence="31">
    <location>
        <begin position="472"/>
        <end position="476"/>
    </location>
</feature>
<feature type="helix" evidence="31">
    <location>
        <begin position="488"/>
        <end position="491"/>
    </location>
</feature>
<feature type="strand" evidence="31">
    <location>
        <begin position="501"/>
        <end position="508"/>
    </location>
</feature>
<feature type="helix" evidence="31">
    <location>
        <begin position="514"/>
        <end position="524"/>
    </location>
</feature>
<feature type="strand" evidence="31">
    <location>
        <begin position="530"/>
        <end position="534"/>
    </location>
</feature>
<feature type="strand" evidence="31">
    <location>
        <begin position="543"/>
        <end position="548"/>
    </location>
</feature>
<feature type="helix" evidence="31">
    <location>
        <begin position="552"/>
        <end position="562"/>
    </location>
</feature>
<feature type="strand" evidence="31">
    <location>
        <begin position="572"/>
        <end position="574"/>
    </location>
</feature>
<feature type="strand" evidence="31">
    <location>
        <begin position="579"/>
        <end position="582"/>
    </location>
</feature>
<sequence length="589" mass="64133">MSRRLLPRAEKRRRRLEQRQQPDEQRRRSGAMVKMAAAGGGGGGGRYYGGGSEGGRAPKRLKTDNAGDQHGGGGGGGGGAGAAGGGGGGENYDDPHKTPASPVVHIRGLIDGVVEADLVEALQEFGPISYVVVMPKKRQALVEFEDVLGACNAVNYAADNQIYIAGHPAFVNYSTSQKISRPGDSDDSRSVNSVLLFTILNPIYSITTDVLYTICNPCGPVQRIVIFRKNGVQAMVEFDSVQSAQRAKASLNGADIYSGCCTLKIEYAKPTRLNVFKNDQDTWDYTNPNLSGQGDPGSNPNKRQRQPPLLGDHPAEYGGPHGGYHSHYHDEGYGPPPPHYEGRRMGPPVGGHRRGPSRYGPQYGHPPPPPPPPEYGPHADSPVLMVYGLDQSKMNCDRVFNVFCLYGNVEKVKFMKSKPGAAMVEMADGYAVDRAITHLNNNFMFGQKLNVCVSKQPAIMPGQSYGLEDGSCSYKDFSESRNNRFSTPEQAAKNRIQHPSNVLHFFNAPLEVTEENFFEICDELGVKRPSSVKVFSGKSERSSSGLLEWESKSDALETLGFLNHYQMKNPNGPYPYTLKLCFSTAQHAS</sequence>
<keyword id="KW-0002">3D-structure</keyword>
<keyword id="KW-0007">Acetylation</keyword>
<keyword id="KW-0025">Alternative splicing</keyword>
<keyword id="KW-0963">Cytoplasm</keyword>
<keyword id="KW-0903">Direct protein sequencing</keyword>
<keyword id="KW-1017">Isopeptide bond</keyword>
<keyword id="KW-0488">Methylation</keyword>
<keyword id="KW-0539">Nucleus</keyword>
<keyword id="KW-0597">Phosphoprotein</keyword>
<keyword id="KW-1267">Proteomics identification</keyword>
<keyword id="KW-1185">Reference proteome</keyword>
<keyword id="KW-0677">Repeat</keyword>
<keyword id="KW-0687">Ribonucleoprotein</keyword>
<keyword id="KW-0694">RNA-binding</keyword>
<keyword id="KW-0832">Ubl conjugation</keyword>
<name>HNRPL_HUMAN</name>
<proteinExistence type="evidence at protein level"/>
<gene>
    <name type="primary">HNRNPL</name>
    <name type="synonym">HNRPL</name>
    <name type="ORF">P/OKcl.14</name>
</gene>
<evidence type="ECO:0000250" key="1">
    <source>
        <dbReference type="UniProtKB" id="Q8R081"/>
    </source>
</evidence>
<evidence type="ECO:0000255" key="2">
    <source>
        <dbReference type="PROSITE-ProRule" id="PRU00176"/>
    </source>
</evidence>
<evidence type="ECO:0000256" key="3">
    <source>
        <dbReference type="SAM" id="MobiDB-lite"/>
    </source>
</evidence>
<evidence type="ECO:0000269" key="4">
    <source>
    </source>
</evidence>
<evidence type="ECO:0000269" key="5">
    <source>
    </source>
</evidence>
<evidence type="ECO:0000269" key="6">
    <source>
    </source>
</evidence>
<evidence type="ECO:0000269" key="7">
    <source>
    </source>
</evidence>
<evidence type="ECO:0000269" key="8">
    <source>
    </source>
</evidence>
<evidence type="ECO:0000269" key="9">
    <source>
    </source>
</evidence>
<evidence type="ECO:0000269" key="10">
    <source>
    </source>
</evidence>
<evidence type="ECO:0000269" key="11">
    <source>
    </source>
</evidence>
<evidence type="ECO:0000269" key="12">
    <source>
    </source>
</evidence>
<evidence type="ECO:0000269" key="13">
    <source>
    </source>
</evidence>
<evidence type="ECO:0000269" key="14">
    <source>
    </source>
</evidence>
<evidence type="ECO:0000269" key="15">
    <source>
    </source>
</evidence>
<evidence type="ECO:0000303" key="16">
    <source>
    </source>
</evidence>
<evidence type="ECO:0000305" key="17"/>
<evidence type="ECO:0000305" key="18">
    <source>
    </source>
</evidence>
<evidence type="ECO:0000305" key="19">
    <source>
    </source>
</evidence>
<evidence type="ECO:0000305" key="20">
    <source>
    </source>
</evidence>
<evidence type="ECO:0007744" key="21">
    <source>
    </source>
</evidence>
<evidence type="ECO:0007744" key="22">
    <source>
    </source>
</evidence>
<evidence type="ECO:0007744" key="23">
    <source>
    </source>
</evidence>
<evidence type="ECO:0007744" key="24">
    <source>
    </source>
</evidence>
<evidence type="ECO:0007744" key="25">
    <source>
    </source>
</evidence>
<evidence type="ECO:0007744" key="26">
    <source>
    </source>
</evidence>
<evidence type="ECO:0007744" key="27">
    <source>
    </source>
</evidence>
<evidence type="ECO:0007744" key="28">
    <source>
    </source>
</evidence>
<evidence type="ECO:0007744" key="29">
    <source>
    </source>
</evidence>
<evidence type="ECO:0007829" key="30">
    <source>
        <dbReference type="PDB" id="3R27"/>
    </source>
</evidence>
<evidence type="ECO:0007829" key="31">
    <source>
        <dbReference type="PDB" id="3TO8"/>
    </source>
</evidence>
<evidence type="ECO:0007829" key="32">
    <source>
        <dbReference type="PDB" id="7EVR"/>
    </source>
</evidence>
<protein>
    <recommendedName>
        <fullName>Heterogeneous nuclear ribonucleoprotein L</fullName>
        <shortName>hnRNP L</shortName>
    </recommendedName>
</protein>
<organism>
    <name type="scientific">Homo sapiens</name>
    <name type="common">Human</name>
    <dbReference type="NCBI Taxonomy" id="9606"/>
    <lineage>
        <taxon>Eukaryota</taxon>
        <taxon>Metazoa</taxon>
        <taxon>Chordata</taxon>
        <taxon>Craniata</taxon>
        <taxon>Vertebrata</taxon>
        <taxon>Euteleostomi</taxon>
        <taxon>Mammalia</taxon>
        <taxon>Eutheria</taxon>
        <taxon>Euarchontoglires</taxon>
        <taxon>Primates</taxon>
        <taxon>Haplorrhini</taxon>
        <taxon>Catarrhini</taxon>
        <taxon>Hominidae</taxon>
        <taxon>Homo</taxon>
    </lineage>
</organism>
<dbReference type="EMBL" id="AB044547">
    <property type="protein sequence ID" value="BAB18649.1"/>
    <property type="molecule type" value="mRNA"/>
</dbReference>
<dbReference type="EMBL" id="AK292115">
    <property type="protein sequence ID" value="BAF84804.1"/>
    <property type="molecule type" value="mRNA"/>
</dbReference>
<dbReference type="EMBL" id="AC008982">
    <property type="status" value="NOT_ANNOTATED_CDS"/>
    <property type="molecule type" value="Genomic_DNA"/>
</dbReference>
<dbReference type="EMBL" id="CH471126">
    <property type="protein sequence ID" value="EAW56828.1"/>
    <property type="molecule type" value="Genomic_DNA"/>
</dbReference>
<dbReference type="EMBL" id="X16135">
    <property type="protein sequence ID" value="CAA34261.1"/>
    <property type="status" value="ALT_INIT"/>
    <property type="molecule type" value="mRNA"/>
</dbReference>
<dbReference type="CCDS" id="CCDS33015.1">
    <molecule id="P14866-1"/>
</dbReference>
<dbReference type="CCDS" id="CCDS33016.1">
    <molecule id="P14866-2"/>
</dbReference>
<dbReference type="PIR" id="A33616">
    <property type="entry name" value="A33616"/>
</dbReference>
<dbReference type="RefSeq" id="NP_001005335.1">
    <molecule id="P14866-2"/>
    <property type="nucleotide sequence ID" value="NM_001005335.2"/>
</dbReference>
<dbReference type="RefSeq" id="NP_001524.2">
    <molecule id="P14866-1"/>
    <property type="nucleotide sequence ID" value="NM_001533.2"/>
</dbReference>
<dbReference type="RefSeq" id="XP_011525191.1">
    <property type="nucleotide sequence ID" value="XM_011526889.1"/>
</dbReference>
<dbReference type="PDB" id="3R27">
    <property type="method" value="X-ray"/>
    <property type="resolution" value="2.04 A"/>
    <property type="chains" value="A/B=90-180"/>
</dbReference>
<dbReference type="PDB" id="3TO8">
    <property type="method" value="X-ray"/>
    <property type="resolution" value="1.82 A"/>
    <property type="chains" value="A=380-589"/>
</dbReference>
<dbReference type="PDB" id="7EVR">
    <property type="method" value="X-ray"/>
    <property type="resolution" value="1.80 A"/>
    <property type="chains" value="A/C=186-289"/>
</dbReference>
<dbReference type="PDBsum" id="3R27"/>
<dbReference type="PDBsum" id="3TO8"/>
<dbReference type="PDBsum" id="7EVR"/>
<dbReference type="BMRB" id="P14866"/>
<dbReference type="SMR" id="P14866"/>
<dbReference type="BioGRID" id="109432">
    <property type="interactions" value="1990"/>
</dbReference>
<dbReference type="CORUM" id="P14866"/>
<dbReference type="DIP" id="DIP-36355N"/>
<dbReference type="FunCoup" id="P14866">
    <property type="interactions" value="3850"/>
</dbReference>
<dbReference type="IntAct" id="P14866">
    <property type="interactions" value="187"/>
</dbReference>
<dbReference type="MINT" id="P14866"/>
<dbReference type="STRING" id="9606.ENSP00000221419"/>
<dbReference type="DrugBank" id="DB09130">
    <property type="generic name" value="Copper"/>
</dbReference>
<dbReference type="GlyGen" id="P14866">
    <property type="glycosylation" value="1 site, 1 O-linked glycan (1 site)"/>
</dbReference>
<dbReference type="iPTMnet" id="P14866"/>
<dbReference type="MetOSite" id="P14866"/>
<dbReference type="PhosphoSitePlus" id="P14866"/>
<dbReference type="SwissPalm" id="P14866"/>
<dbReference type="BioMuta" id="HNRNPL"/>
<dbReference type="DMDM" id="215274006"/>
<dbReference type="REPRODUCTION-2DPAGE" id="IPI00027834"/>
<dbReference type="jPOST" id="P14866"/>
<dbReference type="MassIVE" id="P14866"/>
<dbReference type="PaxDb" id="9606-ENSP00000221419"/>
<dbReference type="PeptideAtlas" id="P14866"/>
<dbReference type="ProteomicsDB" id="1284"/>
<dbReference type="ProteomicsDB" id="53090">
    <molecule id="P14866-1"/>
</dbReference>
<dbReference type="Pumba" id="P14866"/>
<dbReference type="Antibodypedia" id="4276">
    <property type="antibodies" value="459 antibodies from 37 providers"/>
</dbReference>
<dbReference type="DNASU" id="3191"/>
<dbReference type="Ensembl" id="ENST00000221419.10">
    <molecule id="P14866-1"/>
    <property type="protein sequence ID" value="ENSP00000221419.4"/>
    <property type="gene ID" value="ENSG00000104824.18"/>
</dbReference>
<dbReference type="Ensembl" id="ENST00000600873.5">
    <molecule id="P14866-2"/>
    <property type="protein sequence ID" value="ENSP00000470231.1"/>
    <property type="gene ID" value="ENSG00000104824.18"/>
</dbReference>
<dbReference type="Ensembl" id="ENST00000634237.1">
    <molecule id="P14866-2"/>
    <property type="protein sequence ID" value="ENSP00000489244.1"/>
    <property type="gene ID" value="ENSG00000282947.2"/>
</dbReference>
<dbReference type="Ensembl" id="ENST00000634753.1">
    <molecule id="P14866-1"/>
    <property type="protein sequence ID" value="ENSP00000489021.1"/>
    <property type="gene ID" value="ENSG00000282947.2"/>
</dbReference>
<dbReference type="GeneID" id="3191"/>
<dbReference type="KEGG" id="hsa:3191"/>
<dbReference type="MANE-Select" id="ENST00000221419.10">
    <property type="protein sequence ID" value="ENSP00000221419.4"/>
    <property type="RefSeq nucleotide sequence ID" value="NM_001533.3"/>
    <property type="RefSeq protein sequence ID" value="NP_001524.2"/>
</dbReference>
<dbReference type="UCSC" id="uc060yfy.1">
    <molecule id="P14866-1"/>
    <property type="organism name" value="human"/>
</dbReference>
<dbReference type="AGR" id="HGNC:5045"/>
<dbReference type="CTD" id="3191"/>
<dbReference type="DisGeNET" id="3191"/>
<dbReference type="GeneCards" id="HNRNPL"/>
<dbReference type="HGNC" id="HGNC:5045">
    <property type="gene designation" value="HNRNPL"/>
</dbReference>
<dbReference type="HPA" id="ENSG00000104824">
    <property type="expression patterns" value="Low tissue specificity"/>
</dbReference>
<dbReference type="MalaCards" id="HNRNPL"/>
<dbReference type="MIM" id="603083">
    <property type="type" value="gene"/>
</dbReference>
<dbReference type="neXtProt" id="NX_P14866"/>
<dbReference type="OpenTargets" id="ENSG00000104824"/>
<dbReference type="PharmGKB" id="PA162391389"/>
<dbReference type="VEuPathDB" id="HostDB:ENSG00000104824"/>
<dbReference type="eggNOG" id="KOG1456">
    <property type="taxonomic scope" value="Eukaryota"/>
</dbReference>
<dbReference type="GeneTree" id="ENSGT01030000234642"/>
<dbReference type="HOGENOM" id="CLU_015171_0_0_1"/>
<dbReference type="InParanoid" id="P14866"/>
<dbReference type="OMA" id="VYNAQYP"/>
<dbReference type="OrthoDB" id="302770at2759"/>
<dbReference type="PAN-GO" id="P14866">
    <property type="GO annotations" value="3 GO annotations based on evolutionary models"/>
</dbReference>
<dbReference type="PhylomeDB" id="P14866"/>
<dbReference type="TreeFam" id="TF354318"/>
<dbReference type="PathwayCommons" id="P14866"/>
<dbReference type="Reactome" id="R-HSA-72163">
    <property type="pathway name" value="mRNA Splicing - Major Pathway"/>
</dbReference>
<dbReference type="Reactome" id="R-HSA-72203">
    <property type="pathway name" value="Processing of Capped Intron-Containing Pre-mRNA"/>
</dbReference>
<dbReference type="SignaLink" id="P14866"/>
<dbReference type="SIGNOR" id="P14866"/>
<dbReference type="BioGRID-ORCS" id="3191">
    <property type="hits" value="763 hits in 1158 CRISPR screens"/>
</dbReference>
<dbReference type="CD-CODE" id="232F8A39">
    <property type="entry name" value="P-body"/>
</dbReference>
<dbReference type="CD-CODE" id="62EA6512">
    <property type="entry name" value="Sam68 nuclear body"/>
</dbReference>
<dbReference type="CD-CODE" id="91857CE7">
    <property type="entry name" value="Nucleolus"/>
</dbReference>
<dbReference type="CD-CODE" id="DEE660B4">
    <property type="entry name" value="Stress granule"/>
</dbReference>
<dbReference type="CD-CODE" id="F85A2E29">
    <property type="entry name" value="IMP1 RNP granule"/>
</dbReference>
<dbReference type="ChiTaRS" id="HNRNPL">
    <property type="organism name" value="human"/>
</dbReference>
<dbReference type="EvolutionaryTrace" id="P14866"/>
<dbReference type="GeneWiki" id="HNRNPL"/>
<dbReference type="GenomeRNAi" id="3191"/>
<dbReference type="Pharos" id="P14866">
    <property type="development level" value="Tbio"/>
</dbReference>
<dbReference type="PRO" id="PR:P14866"/>
<dbReference type="Proteomes" id="UP000005640">
    <property type="component" value="Chromosome 19"/>
</dbReference>
<dbReference type="RNAct" id="P14866">
    <property type="molecule type" value="protein"/>
</dbReference>
<dbReference type="Bgee" id="ENSG00000104824">
    <property type="expression patterns" value="Expressed in ventricular zone and 195 other cell types or tissues"/>
</dbReference>
<dbReference type="ExpressionAtlas" id="P14866">
    <property type="expression patterns" value="baseline and differential"/>
</dbReference>
<dbReference type="GO" id="GO:0000785">
    <property type="term" value="C:chromatin"/>
    <property type="evidence" value="ECO:0000314"/>
    <property type="project" value="UniProtKB"/>
</dbReference>
<dbReference type="GO" id="GO:0005737">
    <property type="term" value="C:cytoplasm"/>
    <property type="evidence" value="ECO:0000314"/>
    <property type="project" value="UniProtKB"/>
</dbReference>
<dbReference type="GO" id="GO:0070062">
    <property type="term" value="C:extracellular exosome"/>
    <property type="evidence" value="ECO:0007005"/>
    <property type="project" value="UniProtKB"/>
</dbReference>
<dbReference type="GO" id="GO:0016020">
    <property type="term" value="C:membrane"/>
    <property type="evidence" value="ECO:0007005"/>
    <property type="project" value="UniProtKB"/>
</dbReference>
<dbReference type="GO" id="GO:0005654">
    <property type="term" value="C:nucleoplasm"/>
    <property type="evidence" value="ECO:0000314"/>
    <property type="project" value="HPA"/>
</dbReference>
<dbReference type="GO" id="GO:0005634">
    <property type="term" value="C:nucleus"/>
    <property type="evidence" value="ECO:0000314"/>
    <property type="project" value="UniProtKB"/>
</dbReference>
<dbReference type="GO" id="GO:0045120">
    <property type="term" value="C:pronucleus"/>
    <property type="evidence" value="ECO:0007669"/>
    <property type="project" value="Ensembl"/>
</dbReference>
<dbReference type="GO" id="GO:1990904">
    <property type="term" value="C:ribonucleoprotein complex"/>
    <property type="evidence" value="ECO:0000314"/>
    <property type="project" value="UniProtKB"/>
</dbReference>
<dbReference type="GO" id="GO:0035770">
    <property type="term" value="C:ribonucleoprotein granule"/>
    <property type="evidence" value="ECO:0000314"/>
    <property type="project" value="UniProtKB"/>
</dbReference>
<dbReference type="GO" id="GO:0045202">
    <property type="term" value="C:synapse"/>
    <property type="evidence" value="ECO:0007669"/>
    <property type="project" value="Ensembl"/>
</dbReference>
<dbReference type="GO" id="GO:0003729">
    <property type="term" value="F:mRNA binding"/>
    <property type="evidence" value="ECO:0000318"/>
    <property type="project" value="GO_Central"/>
</dbReference>
<dbReference type="GO" id="GO:0097157">
    <property type="term" value="F:pre-mRNA intronic binding"/>
    <property type="evidence" value="ECO:0000314"/>
    <property type="project" value="UniProtKB"/>
</dbReference>
<dbReference type="GO" id="GO:0003723">
    <property type="term" value="F:RNA binding"/>
    <property type="evidence" value="ECO:0007005"/>
    <property type="project" value="UniProtKB"/>
</dbReference>
<dbReference type="GO" id="GO:0000976">
    <property type="term" value="F:transcription cis-regulatory region binding"/>
    <property type="evidence" value="ECO:0000314"/>
    <property type="project" value="UniProtKB"/>
</dbReference>
<dbReference type="GO" id="GO:0006397">
    <property type="term" value="P:mRNA processing"/>
    <property type="evidence" value="ECO:0007669"/>
    <property type="project" value="InterPro"/>
</dbReference>
<dbReference type="GO" id="GO:0045892">
    <property type="term" value="P:negative regulation of DNA-templated transcription"/>
    <property type="evidence" value="ECO:0000315"/>
    <property type="project" value="UniProtKB"/>
</dbReference>
<dbReference type="GO" id="GO:0000381">
    <property type="term" value="P:regulation of alternative mRNA splicing, via spliceosome"/>
    <property type="evidence" value="ECO:0000315"/>
    <property type="project" value="UniProtKB"/>
</dbReference>
<dbReference type="GO" id="GO:0043484">
    <property type="term" value="P:regulation of RNA splicing"/>
    <property type="evidence" value="ECO:0000318"/>
    <property type="project" value="GO_Central"/>
</dbReference>
<dbReference type="GO" id="GO:0006396">
    <property type="term" value="P:RNA processing"/>
    <property type="evidence" value="ECO:0000304"/>
    <property type="project" value="ProtInc"/>
</dbReference>
<dbReference type="CDD" id="cd12780">
    <property type="entry name" value="RRM1_hnRNPL"/>
    <property type="match status" value="1"/>
</dbReference>
<dbReference type="CDD" id="cd12785">
    <property type="entry name" value="RRM2_hnRNPL"/>
    <property type="match status" value="1"/>
</dbReference>
<dbReference type="CDD" id="cd12699">
    <property type="entry name" value="RRM3_hnRNPL"/>
    <property type="match status" value="1"/>
</dbReference>
<dbReference type="CDD" id="cd12704">
    <property type="entry name" value="RRM4_hnRNPL"/>
    <property type="match status" value="1"/>
</dbReference>
<dbReference type="FunFam" id="3.30.70.330:FF:000072">
    <property type="entry name" value="heterogeneous nuclear ribonucleoprotein L isoform X1"/>
    <property type="match status" value="1"/>
</dbReference>
<dbReference type="FunFam" id="3.30.70.330:FF:000052">
    <property type="entry name" value="Heterogeneous nuclear ribonucleoprotein L like"/>
    <property type="match status" value="1"/>
</dbReference>
<dbReference type="FunFam" id="3.30.70.330:FF:000073">
    <property type="entry name" value="Heterogeneous nuclear ribonucleoprotein L like"/>
    <property type="match status" value="1"/>
</dbReference>
<dbReference type="FunFam" id="3.30.70.330:FF:000104">
    <property type="entry name" value="Heterogeneous nuclear ribonucleoprotein L like"/>
    <property type="match status" value="1"/>
</dbReference>
<dbReference type="Gene3D" id="3.30.70.330">
    <property type="match status" value="4"/>
</dbReference>
<dbReference type="InterPro" id="IPR006536">
    <property type="entry name" value="HnRNP-L/PTB"/>
</dbReference>
<dbReference type="InterPro" id="IPR034816">
    <property type="entry name" value="hnRNP-L_RRM3"/>
</dbReference>
<dbReference type="InterPro" id="IPR055204">
    <property type="entry name" value="HNRNPL_RRM"/>
</dbReference>
<dbReference type="InterPro" id="IPR035005">
    <property type="entry name" value="hnRNPL_RRM1"/>
</dbReference>
<dbReference type="InterPro" id="IPR035008">
    <property type="entry name" value="hnRNPL_RRM2"/>
</dbReference>
<dbReference type="InterPro" id="IPR034817">
    <property type="entry name" value="hnRNPL_RRM4"/>
</dbReference>
<dbReference type="InterPro" id="IPR012677">
    <property type="entry name" value="Nucleotide-bd_a/b_plait_sf"/>
</dbReference>
<dbReference type="InterPro" id="IPR021790">
    <property type="entry name" value="PTBP1-like_RRM2"/>
</dbReference>
<dbReference type="InterPro" id="IPR035979">
    <property type="entry name" value="RBD_domain_sf"/>
</dbReference>
<dbReference type="InterPro" id="IPR000504">
    <property type="entry name" value="RRM_dom"/>
</dbReference>
<dbReference type="NCBIfam" id="TIGR01649">
    <property type="entry name" value="hnRNP-L_PTB"/>
    <property type="match status" value="1"/>
</dbReference>
<dbReference type="PANTHER" id="PTHR15592">
    <property type="entry name" value="MATRIN 3/NUCLEAR PROTEIN 220-RELATED"/>
    <property type="match status" value="1"/>
</dbReference>
<dbReference type="Pfam" id="PF00076">
    <property type="entry name" value="RRM_1"/>
    <property type="match status" value="1"/>
</dbReference>
<dbReference type="Pfam" id="PF22976">
    <property type="entry name" value="RRM_10"/>
    <property type="match status" value="1"/>
</dbReference>
<dbReference type="Pfam" id="PF13893">
    <property type="entry name" value="RRM_5"/>
    <property type="match status" value="1"/>
</dbReference>
<dbReference type="Pfam" id="PF11835">
    <property type="entry name" value="RRM_8"/>
    <property type="match status" value="1"/>
</dbReference>
<dbReference type="SMART" id="SM00360">
    <property type="entry name" value="RRM"/>
    <property type="match status" value="3"/>
</dbReference>
<dbReference type="SUPFAM" id="SSF54928">
    <property type="entry name" value="RNA-binding domain, RBD"/>
    <property type="match status" value="3"/>
</dbReference>
<dbReference type="PROSITE" id="PS50102">
    <property type="entry name" value="RRM"/>
    <property type="match status" value="3"/>
</dbReference>